<protein>
    <recommendedName>
        <fullName evidence="1">Large ribosomal subunit protein bL19</fullName>
    </recommendedName>
    <alternativeName>
        <fullName evidence="2">50S ribosomal protein L19</fullName>
    </alternativeName>
</protein>
<dbReference type="EMBL" id="BA000016">
    <property type="protein sequence ID" value="BAB81414.1"/>
    <property type="molecule type" value="Genomic_DNA"/>
</dbReference>
<dbReference type="RefSeq" id="WP_003449446.1">
    <property type="nucleotide sequence ID" value="NC_003366.1"/>
</dbReference>
<dbReference type="SMR" id="Q8XJP8"/>
<dbReference type="STRING" id="195102.gene:10490972"/>
<dbReference type="GeneID" id="93001754"/>
<dbReference type="KEGG" id="cpe:CPE1708"/>
<dbReference type="HOGENOM" id="CLU_103507_2_1_9"/>
<dbReference type="Proteomes" id="UP000000818">
    <property type="component" value="Chromosome"/>
</dbReference>
<dbReference type="GO" id="GO:0022625">
    <property type="term" value="C:cytosolic large ribosomal subunit"/>
    <property type="evidence" value="ECO:0007669"/>
    <property type="project" value="TreeGrafter"/>
</dbReference>
<dbReference type="GO" id="GO:0003735">
    <property type="term" value="F:structural constituent of ribosome"/>
    <property type="evidence" value="ECO:0007669"/>
    <property type="project" value="InterPro"/>
</dbReference>
<dbReference type="GO" id="GO:0006412">
    <property type="term" value="P:translation"/>
    <property type="evidence" value="ECO:0007669"/>
    <property type="project" value="UniProtKB-UniRule"/>
</dbReference>
<dbReference type="FunFam" id="2.30.30.790:FF:000001">
    <property type="entry name" value="50S ribosomal protein L19"/>
    <property type="match status" value="1"/>
</dbReference>
<dbReference type="Gene3D" id="2.30.30.790">
    <property type="match status" value="1"/>
</dbReference>
<dbReference type="HAMAP" id="MF_00402">
    <property type="entry name" value="Ribosomal_bL19"/>
    <property type="match status" value="1"/>
</dbReference>
<dbReference type="InterPro" id="IPR001857">
    <property type="entry name" value="Ribosomal_bL19"/>
</dbReference>
<dbReference type="InterPro" id="IPR018257">
    <property type="entry name" value="Ribosomal_bL19_CS"/>
</dbReference>
<dbReference type="InterPro" id="IPR038657">
    <property type="entry name" value="Ribosomal_bL19_sf"/>
</dbReference>
<dbReference type="InterPro" id="IPR008991">
    <property type="entry name" value="Translation_prot_SH3-like_sf"/>
</dbReference>
<dbReference type="NCBIfam" id="TIGR01024">
    <property type="entry name" value="rplS_bact"/>
    <property type="match status" value="1"/>
</dbReference>
<dbReference type="PANTHER" id="PTHR15680:SF9">
    <property type="entry name" value="LARGE RIBOSOMAL SUBUNIT PROTEIN BL19M"/>
    <property type="match status" value="1"/>
</dbReference>
<dbReference type="PANTHER" id="PTHR15680">
    <property type="entry name" value="RIBOSOMAL PROTEIN L19"/>
    <property type="match status" value="1"/>
</dbReference>
<dbReference type="Pfam" id="PF01245">
    <property type="entry name" value="Ribosomal_L19"/>
    <property type="match status" value="1"/>
</dbReference>
<dbReference type="PIRSF" id="PIRSF002191">
    <property type="entry name" value="Ribosomal_L19"/>
    <property type="match status" value="1"/>
</dbReference>
<dbReference type="PRINTS" id="PR00061">
    <property type="entry name" value="RIBOSOMALL19"/>
</dbReference>
<dbReference type="SUPFAM" id="SSF50104">
    <property type="entry name" value="Translation proteins SH3-like domain"/>
    <property type="match status" value="1"/>
</dbReference>
<dbReference type="PROSITE" id="PS01015">
    <property type="entry name" value="RIBOSOMAL_L19"/>
    <property type="match status" value="1"/>
</dbReference>
<gene>
    <name evidence="1" type="primary">rplS</name>
    <name type="ordered locus">CPE1708</name>
</gene>
<proteinExistence type="inferred from homology"/>
<accession>Q8XJP8</accession>
<evidence type="ECO:0000255" key="1">
    <source>
        <dbReference type="HAMAP-Rule" id="MF_00402"/>
    </source>
</evidence>
<evidence type="ECO:0000305" key="2"/>
<comment type="function">
    <text evidence="1">This protein is located at the 30S-50S ribosomal subunit interface and may play a role in the structure and function of the aminoacyl-tRNA binding site.</text>
</comment>
<comment type="similarity">
    <text evidence="1">Belongs to the bacterial ribosomal protein bL19 family.</text>
</comment>
<name>RL19_CLOPE</name>
<reference key="1">
    <citation type="journal article" date="2002" name="Proc. Natl. Acad. Sci. U.S.A.">
        <title>Complete genome sequence of Clostridium perfringens, an anaerobic flesh-eater.</title>
        <authorList>
            <person name="Shimizu T."/>
            <person name="Ohtani K."/>
            <person name="Hirakawa H."/>
            <person name="Ohshima K."/>
            <person name="Yamashita A."/>
            <person name="Shiba T."/>
            <person name="Ogasawara N."/>
            <person name="Hattori M."/>
            <person name="Kuhara S."/>
            <person name="Hayashi H."/>
        </authorList>
    </citation>
    <scope>NUCLEOTIDE SEQUENCE [LARGE SCALE GENOMIC DNA]</scope>
    <source>
        <strain>13 / Type A</strain>
    </source>
</reference>
<sequence>MNEIIRAIEKEQIREDLTQFNIGDTIKVHVRIKEGNRERIQVFEGTVIKKQNGGLRETFTVRRVAYGVGVERTFPINAPIIDKIDVVRRGKVRRAKLFYLRDRVGKAAKVKELTR</sequence>
<organism>
    <name type="scientific">Clostridium perfringens (strain 13 / Type A)</name>
    <dbReference type="NCBI Taxonomy" id="195102"/>
    <lineage>
        <taxon>Bacteria</taxon>
        <taxon>Bacillati</taxon>
        <taxon>Bacillota</taxon>
        <taxon>Clostridia</taxon>
        <taxon>Eubacteriales</taxon>
        <taxon>Clostridiaceae</taxon>
        <taxon>Clostridium</taxon>
    </lineage>
</organism>
<keyword id="KW-1185">Reference proteome</keyword>
<keyword id="KW-0687">Ribonucleoprotein</keyword>
<keyword id="KW-0689">Ribosomal protein</keyword>
<feature type="chain" id="PRO_0000163442" description="Large ribosomal subunit protein bL19">
    <location>
        <begin position="1"/>
        <end position="115"/>
    </location>
</feature>